<accession>Q55842</accession>
<proteinExistence type="inferred from homology"/>
<dbReference type="EC" id="6.3.5.3" evidence="2"/>
<dbReference type="EMBL" id="BA000022">
    <property type="protein sequence ID" value="BAA10598.1"/>
    <property type="molecule type" value="Genomic_DNA"/>
</dbReference>
<dbReference type="PIR" id="S76654">
    <property type="entry name" value="S76654"/>
</dbReference>
<dbReference type="SMR" id="Q55842"/>
<dbReference type="FunCoup" id="Q55842">
    <property type="interactions" value="61"/>
</dbReference>
<dbReference type="IntAct" id="Q55842">
    <property type="interactions" value="3"/>
</dbReference>
<dbReference type="STRING" id="1148.gene:10500102"/>
<dbReference type="PaxDb" id="1148-1001760"/>
<dbReference type="EnsemblBacteria" id="BAA10598">
    <property type="protein sequence ID" value="BAA10598"/>
    <property type="gene ID" value="BAA10598"/>
</dbReference>
<dbReference type="KEGG" id="syn:slr0519"/>
<dbReference type="eggNOG" id="COG1828">
    <property type="taxonomic scope" value="Bacteria"/>
</dbReference>
<dbReference type="InParanoid" id="Q55842"/>
<dbReference type="PhylomeDB" id="Q55842"/>
<dbReference type="UniPathway" id="UPA00074">
    <property type="reaction ID" value="UER00128"/>
</dbReference>
<dbReference type="Proteomes" id="UP000001425">
    <property type="component" value="Chromosome"/>
</dbReference>
<dbReference type="GO" id="GO:0005737">
    <property type="term" value="C:cytoplasm"/>
    <property type="evidence" value="ECO:0007669"/>
    <property type="project" value="UniProtKB-SubCell"/>
</dbReference>
<dbReference type="GO" id="GO:0005524">
    <property type="term" value="F:ATP binding"/>
    <property type="evidence" value="ECO:0007669"/>
    <property type="project" value="UniProtKB-UniRule"/>
</dbReference>
<dbReference type="GO" id="GO:0004642">
    <property type="term" value="F:phosphoribosylformylglycinamidine synthase activity"/>
    <property type="evidence" value="ECO:0007669"/>
    <property type="project" value="UniProtKB-UniRule"/>
</dbReference>
<dbReference type="GO" id="GO:0006189">
    <property type="term" value="P:'de novo' IMP biosynthetic process"/>
    <property type="evidence" value="ECO:0007669"/>
    <property type="project" value="UniProtKB-UniRule"/>
</dbReference>
<dbReference type="Gene3D" id="3.30.1280.10">
    <property type="entry name" value="Phosphoribosylformylglycinamidine synthase subunit PurS"/>
    <property type="match status" value="1"/>
</dbReference>
<dbReference type="HAMAP" id="MF_01926">
    <property type="entry name" value="PurS"/>
    <property type="match status" value="1"/>
</dbReference>
<dbReference type="InterPro" id="IPR003850">
    <property type="entry name" value="PurS"/>
</dbReference>
<dbReference type="InterPro" id="IPR036604">
    <property type="entry name" value="PurS-like_sf"/>
</dbReference>
<dbReference type="NCBIfam" id="TIGR00302">
    <property type="entry name" value="phosphoribosylformylglycinamidine synthase subunit PurS"/>
    <property type="match status" value="1"/>
</dbReference>
<dbReference type="NCBIfam" id="NF004630">
    <property type="entry name" value="PRK05974.1"/>
    <property type="match status" value="1"/>
</dbReference>
<dbReference type="PANTHER" id="PTHR34696">
    <property type="entry name" value="PHOSPHORIBOSYLFORMYLGLYCINAMIDINE SYNTHASE SUBUNIT PURS"/>
    <property type="match status" value="1"/>
</dbReference>
<dbReference type="PANTHER" id="PTHR34696:SF1">
    <property type="entry name" value="PHOSPHORIBOSYLFORMYLGLYCINAMIDINE SYNTHASE SUBUNIT PURS"/>
    <property type="match status" value="1"/>
</dbReference>
<dbReference type="Pfam" id="PF02700">
    <property type="entry name" value="PurS"/>
    <property type="match status" value="1"/>
</dbReference>
<dbReference type="SUPFAM" id="SSF82697">
    <property type="entry name" value="PurS-like"/>
    <property type="match status" value="1"/>
</dbReference>
<comment type="function">
    <text evidence="2">Part of the phosphoribosylformylglycinamidine synthase complex involved in the purines biosynthetic pathway. Catalyzes the ATP-dependent conversion of formylglycinamide ribonucleotide (FGAR) and glutamine to yield formylglycinamidine ribonucleotide (FGAM) and glutamate. The FGAM synthase complex is composed of three subunits. PurQ produces an ammonia molecule by converting glutamine to glutamate. PurL transfers the ammonia molecule to FGAR to form FGAM in an ATP-dependent manner. PurS interacts with PurQ and PurL and is thought to assist in the transfer of the ammonia molecule from PurQ to PurL.</text>
</comment>
<comment type="catalytic activity">
    <reaction evidence="2">
        <text>N(2)-formyl-N(1)-(5-phospho-beta-D-ribosyl)glycinamide + L-glutamine + ATP + H2O = 2-formamido-N(1)-(5-O-phospho-beta-D-ribosyl)acetamidine + L-glutamate + ADP + phosphate + H(+)</text>
        <dbReference type="Rhea" id="RHEA:17129"/>
        <dbReference type="ChEBI" id="CHEBI:15377"/>
        <dbReference type="ChEBI" id="CHEBI:15378"/>
        <dbReference type="ChEBI" id="CHEBI:29985"/>
        <dbReference type="ChEBI" id="CHEBI:30616"/>
        <dbReference type="ChEBI" id="CHEBI:43474"/>
        <dbReference type="ChEBI" id="CHEBI:58359"/>
        <dbReference type="ChEBI" id="CHEBI:147286"/>
        <dbReference type="ChEBI" id="CHEBI:147287"/>
        <dbReference type="ChEBI" id="CHEBI:456216"/>
        <dbReference type="EC" id="6.3.5.3"/>
    </reaction>
</comment>
<comment type="pathway">
    <text evidence="2">Purine metabolism; IMP biosynthesis via de novo pathway; 5-amino-1-(5-phospho-D-ribosyl)imidazole from N(2)-formyl-N(1)-(5-phospho-D-ribosyl)glycinamide: step 1/2.</text>
</comment>
<comment type="subunit">
    <text evidence="1">Homodimer. Part of the FGAM synthase complex composed of 1 PurL, 1 PurQ and 2 PurS subunits (By similarity).</text>
</comment>
<comment type="subcellular location">
    <subcellularLocation>
        <location evidence="2">Cytoplasm</location>
    </subcellularLocation>
</comment>
<comment type="similarity">
    <text evidence="2">Belongs to the PurS family.</text>
</comment>
<sequence length="100" mass="10862">MADSPVRPSMSHSYHCRIYVTLRPSVLDPAGTAVQSGLQQLGYDGVSQVRIGKYIELTLEAPDEATASQQLDTMCDQLLANTVIENYCFEITALEGAVTP</sequence>
<gene>
    <name evidence="2" type="primary">purS</name>
    <name type="ordered locus">slr0519</name>
</gene>
<evidence type="ECO:0000250" key="1"/>
<evidence type="ECO:0000255" key="2">
    <source>
        <dbReference type="HAMAP-Rule" id="MF_01926"/>
    </source>
</evidence>
<name>PURS_SYNY3</name>
<keyword id="KW-0067">ATP-binding</keyword>
<keyword id="KW-0963">Cytoplasm</keyword>
<keyword id="KW-0436">Ligase</keyword>
<keyword id="KW-0547">Nucleotide-binding</keyword>
<keyword id="KW-0658">Purine biosynthesis</keyword>
<keyword id="KW-1185">Reference proteome</keyword>
<feature type="chain" id="PRO_0000100397" description="Phosphoribosylformylglycinamidine synthase subunit PurS">
    <location>
        <begin position="1"/>
        <end position="100"/>
    </location>
</feature>
<reference key="1">
    <citation type="journal article" date="1995" name="DNA Res.">
        <title>Sequence analysis of the genome of the unicellular cyanobacterium Synechocystis sp. strain PCC6803. I. Sequence features in the 1 Mb region from map positions 64% to 92% of the genome.</title>
        <authorList>
            <person name="Kaneko T."/>
            <person name="Tanaka A."/>
            <person name="Sato S."/>
            <person name="Kotani H."/>
            <person name="Sazuka T."/>
            <person name="Miyajima N."/>
            <person name="Sugiura M."/>
            <person name="Tabata S."/>
        </authorList>
    </citation>
    <scope>NUCLEOTIDE SEQUENCE [LARGE SCALE GENOMIC DNA]</scope>
    <source>
        <strain>ATCC 27184 / PCC 6803 / N-1</strain>
    </source>
</reference>
<reference key="2">
    <citation type="journal article" date="1996" name="DNA Res.">
        <title>Sequence analysis of the genome of the unicellular cyanobacterium Synechocystis sp. strain PCC6803. II. Sequence determination of the entire genome and assignment of potential protein-coding regions.</title>
        <authorList>
            <person name="Kaneko T."/>
            <person name="Sato S."/>
            <person name="Kotani H."/>
            <person name="Tanaka A."/>
            <person name="Asamizu E."/>
            <person name="Nakamura Y."/>
            <person name="Miyajima N."/>
            <person name="Hirosawa M."/>
            <person name="Sugiura M."/>
            <person name="Sasamoto S."/>
            <person name="Kimura T."/>
            <person name="Hosouchi T."/>
            <person name="Matsuno A."/>
            <person name="Muraki A."/>
            <person name="Nakazaki N."/>
            <person name="Naruo K."/>
            <person name="Okumura S."/>
            <person name="Shimpo S."/>
            <person name="Takeuchi C."/>
            <person name="Wada T."/>
            <person name="Watanabe A."/>
            <person name="Yamada M."/>
            <person name="Yasuda M."/>
            <person name="Tabata S."/>
        </authorList>
    </citation>
    <scope>NUCLEOTIDE SEQUENCE [LARGE SCALE GENOMIC DNA]</scope>
    <source>
        <strain>ATCC 27184 / PCC 6803 / Kazusa</strain>
    </source>
</reference>
<organism>
    <name type="scientific">Synechocystis sp. (strain ATCC 27184 / PCC 6803 / Kazusa)</name>
    <dbReference type="NCBI Taxonomy" id="1111708"/>
    <lineage>
        <taxon>Bacteria</taxon>
        <taxon>Bacillati</taxon>
        <taxon>Cyanobacteriota</taxon>
        <taxon>Cyanophyceae</taxon>
        <taxon>Synechococcales</taxon>
        <taxon>Merismopediaceae</taxon>
        <taxon>Synechocystis</taxon>
    </lineage>
</organism>
<protein>
    <recommendedName>
        <fullName evidence="2">Phosphoribosylformylglycinamidine synthase subunit PurS</fullName>
        <shortName evidence="2">FGAM synthase</shortName>
        <ecNumber evidence="2">6.3.5.3</ecNumber>
    </recommendedName>
    <alternativeName>
        <fullName evidence="2">Formylglycinamide ribonucleotide amidotransferase subunit III</fullName>
        <shortName evidence="2">FGAR amidotransferase III</shortName>
        <shortName evidence="2">FGAR-AT III</shortName>
    </alternativeName>
    <alternativeName>
        <fullName evidence="2">Phosphoribosylformylglycinamidine synthase subunit III</fullName>
    </alternativeName>
</protein>